<protein>
    <recommendedName>
        <fullName evidence="1">Large ribosomal subunit protein uL4</fullName>
    </recommendedName>
    <alternativeName>
        <fullName evidence="3">50S ribosomal protein L4</fullName>
    </alternativeName>
</protein>
<accession>Q9PJL5</accession>
<dbReference type="EMBL" id="AE002160">
    <property type="protein sequence ID" value="AAF39616.1"/>
    <property type="molecule type" value="Genomic_DNA"/>
</dbReference>
<dbReference type="PIR" id="C81661">
    <property type="entry name" value="C81661"/>
</dbReference>
<dbReference type="RefSeq" id="WP_010231647.1">
    <property type="nucleotide sequence ID" value="NZ_CP063055.1"/>
</dbReference>
<dbReference type="SMR" id="Q9PJL5"/>
<dbReference type="GeneID" id="1246181"/>
<dbReference type="KEGG" id="cmu:TC_0814"/>
<dbReference type="eggNOG" id="COG0088">
    <property type="taxonomic scope" value="Bacteria"/>
</dbReference>
<dbReference type="HOGENOM" id="CLU_041575_5_2_0"/>
<dbReference type="OrthoDB" id="9803201at2"/>
<dbReference type="Proteomes" id="UP000000800">
    <property type="component" value="Chromosome"/>
</dbReference>
<dbReference type="GO" id="GO:1990904">
    <property type="term" value="C:ribonucleoprotein complex"/>
    <property type="evidence" value="ECO:0007669"/>
    <property type="project" value="UniProtKB-KW"/>
</dbReference>
<dbReference type="GO" id="GO:0005840">
    <property type="term" value="C:ribosome"/>
    <property type="evidence" value="ECO:0007669"/>
    <property type="project" value="UniProtKB-KW"/>
</dbReference>
<dbReference type="GO" id="GO:0019843">
    <property type="term" value="F:rRNA binding"/>
    <property type="evidence" value="ECO:0007669"/>
    <property type="project" value="UniProtKB-UniRule"/>
</dbReference>
<dbReference type="GO" id="GO:0003735">
    <property type="term" value="F:structural constituent of ribosome"/>
    <property type="evidence" value="ECO:0007669"/>
    <property type="project" value="InterPro"/>
</dbReference>
<dbReference type="GO" id="GO:0006412">
    <property type="term" value="P:translation"/>
    <property type="evidence" value="ECO:0007669"/>
    <property type="project" value="UniProtKB-UniRule"/>
</dbReference>
<dbReference type="FunFam" id="3.40.1370.10:FF:000008">
    <property type="entry name" value="50S ribosomal protein L4"/>
    <property type="match status" value="1"/>
</dbReference>
<dbReference type="Gene3D" id="3.40.1370.10">
    <property type="match status" value="1"/>
</dbReference>
<dbReference type="HAMAP" id="MF_01328_B">
    <property type="entry name" value="Ribosomal_uL4_B"/>
    <property type="match status" value="1"/>
</dbReference>
<dbReference type="InterPro" id="IPR002136">
    <property type="entry name" value="Ribosomal_uL4"/>
</dbReference>
<dbReference type="InterPro" id="IPR013005">
    <property type="entry name" value="Ribosomal_uL4-like"/>
</dbReference>
<dbReference type="InterPro" id="IPR023574">
    <property type="entry name" value="Ribosomal_uL4_dom_sf"/>
</dbReference>
<dbReference type="NCBIfam" id="TIGR03953">
    <property type="entry name" value="rplD_bact"/>
    <property type="match status" value="1"/>
</dbReference>
<dbReference type="PANTHER" id="PTHR10746">
    <property type="entry name" value="50S RIBOSOMAL PROTEIN L4"/>
    <property type="match status" value="1"/>
</dbReference>
<dbReference type="PANTHER" id="PTHR10746:SF6">
    <property type="entry name" value="LARGE RIBOSOMAL SUBUNIT PROTEIN UL4M"/>
    <property type="match status" value="1"/>
</dbReference>
<dbReference type="Pfam" id="PF00573">
    <property type="entry name" value="Ribosomal_L4"/>
    <property type="match status" value="1"/>
</dbReference>
<dbReference type="SUPFAM" id="SSF52166">
    <property type="entry name" value="Ribosomal protein L4"/>
    <property type="match status" value="1"/>
</dbReference>
<sequence length="222" mass="24523">MVLLSKFDFSGKESGKVELPDAFFAEGKEQSVKDYLVAIQANKRQWSACTRGRSEVSHSTRKPFRQKGTGNARQGCLAAPQFRGGGIVFGPKPKFDQHVRINKKERRAAIRLLLAQKIQTGKLIVADNSVFISSLNAPKTKEALRFLKECNVECRGVLFVDGLDHVGSNENLRLSVRNLAAVRGFTYGENINGYDIAAARNIVVSEKALELLVENLVSTTKD</sequence>
<keyword id="KW-0687">Ribonucleoprotein</keyword>
<keyword id="KW-0689">Ribosomal protein</keyword>
<keyword id="KW-0694">RNA-binding</keyword>
<keyword id="KW-0699">rRNA-binding</keyword>
<organism>
    <name type="scientific">Chlamydia muridarum (strain MoPn / Nigg)</name>
    <dbReference type="NCBI Taxonomy" id="243161"/>
    <lineage>
        <taxon>Bacteria</taxon>
        <taxon>Pseudomonadati</taxon>
        <taxon>Chlamydiota</taxon>
        <taxon>Chlamydiia</taxon>
        <taxon>Chlamydiales</taxon>
        <taxon>Chlamydiaceae</taxon>
        <taxon>Chlamydia/Chlamydophila group</taxon>
        <taxon>Chlamydia</taxon>
    </lineage>
</organism>
<name>RL4_CHLMU</name>
<reference key="1">
    <citation type="journal article" date="2000" name="Nucleic Acids Res.">
        <title>Genome sequences of Chlamydia trachomatis MoPn and Chlamydia pneumoniae AR39.</title>
        <authorList>
            <person name="Read T.D."/>
            <person name="Brunham R.C."/>
            <person name="Shen C."/>
            <person name="Gill S.R."/>
            <person name="Heidelberg J.F."/>
            <person name="White O."/>
            <person name="Hickey E.K."/>
            <person name="Peterson J.D."/>
            <person name="Utterback T.R."/>
            <person name="Berry K.J."/>
            <person name="Bass S."/>
            <person name="Linher K.D."/>
            <person name="Weidman J.F."/>
            <person name="Khouri H.M."/>
            <person name="Craven B."/>
            <person name="Bowman C."/>
            <person name="Dodson R.J."/>
            <person name="Gwinn M.L."/>
            <person name="Nelson W.C."/>
            <person name="DeBoy R.T."/>
            <person name="Kolonay J.F."/>
            <person name="McClarty G."/>
            <person name="Salzberg S.L."/>
            <person name="Eisen J.A."/>
            <person name="Fraser C.M."/>
        </authorList>
    </citation>
    <scope>NUCLEOTIDE SEQUENCE [LARGE SCALE GENOMIC DNA]</scope>
    <source>
        <strain>MoPn / Nigg</strain>
    </source>
</reference>
<evidence type="ECO:0000255" key="1">
    <source>
        <dbReference type="HAMAP-Rule" id="MF_01328"/>
    </source>
</evidence>
<evidence type="ECO:0000256" key="2">
    <source>
        <dbReference type="SAM" id="MobiDB-lite"/>
    </source>
</evidence>
<evidence type="ECO:0000305" key="3"/>
<comment type="function">
    <text evidence="1">One of the primary rRNA binding proteins, this protein initially binds near the 5'-end of the 23S rRNA. It is important during the early stages of 50S assembly. It makes multiple contacts with different domains of the 23S rRNA in the assembled 50S subunit and ribosome.</text>
</comment>
<comment type="function">
    <text evidence="1">Forms part of the polypeptide exit tunnel.</text>
</comment>
<comment type="subunit">
    <text evidence="1">Part of the 50S ribosomal subunit.</text>
</comment>
<comment type="similarity">
    <text evidence="1">Belongs to the universal ribosomal protein uL4 family.</text>
</comment>
<proteinExistence type="inferred from homology"/>
<gene>
    <name evidence="1" type="primary">rplD</name>
    <name type="ordered locus">TC_0814</name>
</gene>
<feature type="chain" id="PRO_0000129202" description="Large ribosomal subunit protein uL4">
    <location>
        <begin position="1"/>
        <end position="222"/>
    </location>
</feature>
<feature type="region of interest" description="Disordered" evidence="2">
    <location>
        <begin position="50"/>
        <end position="72"/>
    </location>
</feature>